<protein>
    <recommendedName>
        <fullName>Uncharacterized protein YBR259W</fullName>
    </recommendedName>
</protein>
<sequence>MSIDEAVARYRDVIGNLATGNLRRIVIQSEKLAQIIASSKGTVRFHHKTRSGKTVIYKCIKKALLSSVASLSSEFSSETDVQQFLHLNYIYQSHFQALSGQINKYCGMKKYYELKFAAIDYLETEVQTTGLTLSRFWVASLDEFIKKERWPDNGSNFQIFYKLMAEYSSWKWDSDDKRQLQFMYEFRMKLKECLVKFYENFDLQKSSDPLKELIIPWEKIVYVANCIDAFTGEQVRIDGAELIWTSKNLVFSSISSAVLRLNDLQNMFSAFRPYGEEALVQDFAHIRSLKWDSNDKVESLIRALIFNDMFPYFNKEQVDTKADGIFFLRLLRKNFKEHINDVKDFHIQVIKYLNSQFKNNYSTLMTSSKTQDRRKSHNMPSSILDDGNKIGMHVSPIDEYSHFIDNDEPLWRDKVYPKIYTNEQTPTPDASAIFDSHKIYAIISLLRYYLPEKRKFFRIYYLPSIFKRILYYGAKFAQLYFMEGCLERLVIESLQILEPSLVHAINNLIKSSIESLKNVTVTSDDKTSSGVIILSYKEFKSLSEVNKDFNEPFWPNQSIANSWPDFANKQLKRGQILQDAFAFHLFEIELPIIIDTTRNTHLKLVSNMCTTSILYLYNEVDSLSLTSIQEKLAVLPTSKRNEILLYNLNRLTKLKLLLLKENEKGQKFYAFNFKYKRDGQKTSLIRLI</sequence>
<name>YB9F_YEAST</name>
<feature type="chain" id="PRO_0000202526" description="Uncharacterized protein YBR259W">
    <location>
        <begin position="1"/>
        <end position="688"/>
    </location>
</feature>
<gene>
    <name type="ordered locus">YBR259W</name>
    <name type="ORF">YBR1727</name>
</gene>
<keyword id="KW-1185">Reference proteome</keyword>
<reference key="1">
    <citation type="journal article" date="1993" name="Yeast">
        <title>The complete sequence of a 19,482 bp segment located on the right arm of chromosome II from Saccharomyces cerevisiae.</title>
        <authorList>
            <person name="Doignon F."/>
            <person name="Biteau N."/>
            <person name="Crouzet M."/>
            <person name="Aigle M."/>
        </authorList>
    </citation>
    <scope>NUCLEOTIDE SEQUENCE [GENOMIC DNA]</scope>
    <source>
        <strain>ATCC 204508 / S288c</strain>
    </source>
</reference>
<reference key="2">
    <citation type="journal article" date="1994" name="EMBO J.">
        <title>Complete DNA sequence of yeast chromosome II.</title>
        <authorList>
            <person name="Feldmann H."/>
            <person name="Aigle M."/>
            <person name="Aljinovic G."/>
            <person name="Andre B."/>
            <person name="Baclet M.C."/>
            <person name="Barthe C."/>
            <person name="Baur A."/>
            <person name="Becam A.-M."/>
            <person name="Biteau N."/>
            <person name="Boles E."/>
            <person name="Brandt T."/>
            <person name="Brendel M."/>
            <person name="Brueckner M."/>
            <person name="Bussereau F."/>
            <person name="Christiansen C."/>
            <person name="Contreras R."/>
            <person name="Crouzet M."/>
            <person name="Cziepluch C."/>
            <person name="Demolis N."/>
            <person name="Delaveau T."/>
            <person name="Doignon F."/>
            <person name="Domdey H."/>
            <person name="Duesterhus S."/>
            <person name="Dubois E."/>
            <person name="Dujon B."/>
            <person name="El Bakkoury M."/>
            <person name="Entian K.-D."/>
            <person name="Feuermann M."/>
            <person name="Fiers W."/>
            <person name="Fobo G.M."/>
            <person name="Fritz C."/>
            <person name="Gassenhuber J."/>
            <person name="Glansdorff N."/>
            <person name="Goffeau A."/>
            <person name="Grivell L.A."/>
            <person name="de Haan M."/>
            <person name="Hein C."/>
            <person name="Herbert C.J."/>
            <person name="Hollenberg C.P."/>
            <person name="Holmstroem K."/>
            <person name="Jacq C."/>
            <person name="Jacquet M."/>
            <person name="Jauniaux J.-C."/>
            <person name="Jonniaux J.-L."/>
            <person name="Kallesoee T."/>
            <person name="Kiesau P."/>
            <person name="Kirchrath L."/>
            <person name="Koetter P."/>
            <person name="Korol S."/>
            <person name="Liebl S."/>
            <person name="Logghe M."/>
            <person name="Lohan A.J.E."/>
            <person name="Louis E.J."/>
            <person name="Li Z.Y."/>
            <person name="Maat M.J."/>
            <person name="Mallet L."/>
            <person name="Mannhaupt G."/>
            <person name="Messenguy F."/>
            <person name="Miosga T."/>
            <person name="Molemans F."/>
            <person name="Mueller S."/>
            <person name="Nasr F."/>
            <person name="Obermaier B."/>
            <person name="Perea J."/>
            <person name="Pierard A."/>
            <person name="Piravandi E."/>
            <person name="Pohl F.M."/>
            <person name="Pohl T.M."/>
            <person name="Potier S."/>
            <person name="Proft M."/>
            <person name="Purnelle B."/>
            <person name="Ramezani Rad M."/>
            <person name="Rieger M."/>
            <person name="Rose M."/>
            <person name="Schaaff-Gerstenschlaeger I."/>
            <person name="Scherens B."/>
            <person name="Schwarzlose C."/>
            <person name="Skala J."/>
            <person name="Slonimski P.P."/>
            <person name="Smits P.H.M."/>
            <person name="Souciet J.-L."/>
            <person name="Steensma H.Y."/>
            <person name="Stucka R."/>
            <person name="Urrestarazu L.A."/>
            <person name="van der Aart Q.J.M."/>
            <person name="Van Dyck L."/>
            <person name="Vassarotti A."/>
            <person name="Vetter I."/>
            <person name="Vierendeels F."/>
            <person name="Vissers S."/>
            <person name="Wagner G."/>
            <person name="de Wergifosse P."/>
            <person name="Wolfe K.H."/>
            <person name="Zagulski M."/>
            <person name="Zimmermann F.K."/>
            <person name="Mewes H.-W."/>
            <person name="Kleine K."/>
        </authorList>
    </citation>
    <scope>NUCLEOTIDE SEQUENCE [LARGE SCALE GENOMIC DNA]</scope>
    <source>
        <strain>ATCC 204508 / S288c</strain>
    </source>
</reference>
<reference key="3">
    <citation type="journal article" date="2014" name="G3 (Bethesda)">
        <title>The reference genome sequence of Saccharomyces cerevisiae: Then and now.</title>
        <authorList>
            <person name="Engel S.R."/>
            <person name="Dietrich F.S."/>
            <person name="Fisk D.G."/>
            <person name="Binkley G."/>
            <person name="Balakrishnan R."/>
            <person name="Costanzo M.C."/>
            <person name="Dwight S.S."/>
            <person name="Hitz B.C."/>
            <person name="Karra K."/>
            <person name="Nash R.S."/>
            <person name="Weng S."/>
            <person name="Wong E.D."/>
            <person name="Lloyd P."/>
            <person name="Skrzypek M.S."/>
            <person name="Miyasato S.R."/>
            <person name="Simison M."/>
            <person name="Cherry J.M."/>
        </authorList>
    </citation>
    <scope>GENOME REANNOTATION</scope>
    <source>
        <strain>ATCC 204508 / S288c</strain>
    </source>
</reference>
<organism>
    <name type="scientific">Saccharomyces cerevisiae (strain ATCC 204508 / S288c)</name>
    <name type="common">Baker's yeast</name>
    <dbReference type="NCBI Taxonomy" id="559292"/>
    <lineage>
        <taxon>Eukaryota</taxon>
        <taxon>Fungi</taxon>
        <taxon>Dikarya</taxon>
        <taxon>Ascomycota</taxon>
        <taxon>Saccharomycotina</taxon>
        <taxon>Saccharomycetes</taxon>
        <taxon>Saccharomycetales</taxon>
        <taxon>Saccharomycetaceae</taxon>
        <taxon>Saccharomyces</taxon>
    </lineage>
</organism>
<dbReference type="EMBL" id="X70529">
    <property type="protein sequence ID" value="CAA49923.1"/>
    <property type="molecule type" value="Genomic_DNA"/>
</dbReference>
<dbReference type="EMBL" id="Z36128">
    <property type="protein sequence ID" value="CAA85222.1"/>
    <property type="molecule type" value="Genomic_DNA"/>
</dbReference>
<dbReference type="EMBL" id="BK006936">
    <property type="protein sequence ID" value="DAA07376.1"/>
    <property type="molecule type" value="Genomic_DNA"/>
</dbReference>
<dbReference type="PIR" id="S32961">
    <property type="entry name" value="S32961"/>
</dbReference>
<dbReference type="RefSeq" id="NP_009818.3">
    <property type="nucleotide sequence ID" value="NM_001178607.3"/>
</dbReference>
<dbReference type="BioGRID" id="32955">
    <property type="interactions" value="21"/>
</dbReference>
<dbReference type="FunCoup" id="P38338">
    <property type="interactions" value="39"/>
</dbReference>
<dbReference type="IntAct" id="P38338">
    <property type="interactions" value="2"/>
</dbReference>
<dbReference type="MINT" id="P38338"/>
<dbReference type="STRING" id="4932.YBR259W"/>
<dbReference type="PaxDb" id="4932-YBR259W"/>
<dbReference type="PeptideAtlas" id="P38338"/>
<dbReference type="EnsemblFungi" id="YBR259W_mRNA">
    <property type="protein sequence ID" value="YBR259W"/>
    <property type="gene ID" value="YBR259W"/>
</dbReference>
<dbReference type="GeneID" id="852562"/>
<dbReference type="KEGG" id="sce:YBR259W"/>
<dbReference type="AGR" id="SGD:S000000463"/>
<dbReference type="SGD" id="S000000463">
    <property type="gene designation" value="YBR259W"/>
</dbReference>
<dbReference type="VEuPathDB" id="FungiDB:YBR259W"/>
<dbReference type="eggNOG" id="ENOG502S98J">
    <property type="taxonomic scope" value="Eukaryota"/>
</dbReference>
<dbReference type="HOGENOM" id="CLU_400203_0_0_1"/>
<dbReference type="InParanoid" id="P38338"/>
<dbReference type="OMA" id="ANCIDAF"/>
<dbReference type="OrthoDB" id="4045473at2759"/>
<dbReference type="BioCyc" id="YEAST:G3O-29183-MONOMER"/>
<dbReference type="BioGRID-ORCS" id="852562">
    <property type="hits" value="0 hits in 10 CRISPR screens"/>
</dbReference>
<dbReference type="PRO" id="PR:P38338"/>
<dbReference type="Proteomes" id="UP000002311">
    <property type="component" value="Chromosome II"/>
</dbReference>
<dbReference type="RNAct" id="P38338">
    <property type="molecule type" value="protein"/>
</dbReference>
<dbReference type="InterPro" id="IPR036317">
    <property type="entry name" value="Cullin_homology_sf"/>
</dbReference>
<dbReference type="SUPFAM" id="SSF75632">
    <property type="entry name" value="Cullin homology domain"/>
    <property type="match status" value="1"/>
</dbReference>
<proteinExistence type="predicted"/>
<accession>P38338</accession>
<accession>D6VQQ6</accession>